<evidence type="ECO:0000250" key="1">
    <source>
        <dbReference type="UniProtKB" id="P22725"/>
    </source>
</evidence>
<evidence type="ECO:0000250" key="2">
    <source>
        <dbReference type="UniProtKB" id="P27467"/>
    </source>
</evidence>
<evidence type="ECO:0000250" key="3">
    <source>
        <dbReference type="UniProtKB" id="P28026"/>
    </source>
</evidence>
<evidence type="ECO:0000250" key="4">
    <source>
        <dbReference type="UniProtKB" id="P41221"/>
    </source>
</evidence>
<evidence type="ECO:0000250" key="5">
    <source>
        <dbReference type="UniProtKB" id="P56704"/>
    </source>
</evidence>
<evidence type="ECO:0000255" key="6"/>
<evidence type="ECO:0000305" key="7"/>
<gene>
    <name type="primary">WNT5A</name>
</gene>
<proteinExistence type="inferred from homology"/>
<dbReference type="EMBL" id="M91284">
    <property type="protein sequence ID" value="AAA49633.1"/>
    <property type="molecule type" value="Genomic_DNA"/>
</dbReference>
<dbReference type="SMR" id="P28128"/>
<dbReference type="GlyCosmos" id="P28128">
    <property type="glycosylation" value="2 sites, No reported glycans"/>
</dbReference>
<dbReference type="InParanoid" id="P28128"/>
<dbReference type="OrthoDB" id="5945655at2759"/>
<dbReference type="Proteomes" id="UP000001645">
    <property type="component" value="Unplaced"/>
</dbReference>
<dbReference type="GO" id="GO:0005615">
    <property type="term" value="C:extracellular space"/>
    <property type="evidence" value="ECO:0007669"/>
    <property type="project" value="TreeGrafter"/>
</dbReference>
<dbReference type="GO" id="GO:0005125">
    <property type="term" value="F:cytokine activity"/>
    <property type="evidence" value="ECO:0007669"/>
    <property type="project" value="TreeGrafter"/>
</dbReference>
<dbReference type="GO" id="GO:0005109">
    <property type="term" value="F:frizzled binding"/>
    <property type="evidence" value="ECO:0007669"/>
    <property type="project" value="TreeGrafter"/>
</dbReference>
<dbReference type="GO" id="GO:0060070">
    <property type="term" value="P:canonical Wnt signaling pathway"/>
    <property type="evidence" value="ECO:0007669"/>
    <property type="project" value="TreeGrafter"/>
</dbReference>
<dbReference type="GO" id="GO:0045165">
    <property type="term" value="P:cell fate commitment"/>
    <property type="evidence" value="ECO:0007669"/>
    <property type="project" value="TreeGrafter"/>
</dbReference>
<dbReference type="GO" id="GO:0030182">
    <property type="term" value="P:neuron differentiation"/>
    <property type="evidence" value="ECO:0007669"/>
    <property type="project" value="TreeGrafter"/>
</dbReference>
<dbReference type="Gene3D" id="3.30.2460.20">
    <property type="match status" value="1"/>
</dbReference>
<dbReference type="InterPro" id="IPR005817">
    <property type="entry name" value="Wnt"/>
</dbReference>
<dbReference type="InterPro" id="IPR043158">
    <property type="entry name" value="Wnt_C"/>
</dbReference>
<dbReference type="PANTHER" id="PTHR12027:SF33">
    <property type="entry name" value="PROTEIN WNT-5A"/>
    <property type="match status" value="1"/>
</dbReference>
<dbReference type="PANTHER" id="PTHR12027">
    <property type="entry name" value="WNT RELATED"/>
    <property type="match status" value="1"/>
</dbReference>
<dbReference type="Pfam" id="PF00110">
    <property type="entry name" value="wnt"/>
    <property type="match status" value="1"/>
</dbReference>
<dbReference type="SMART" id="SM00097">
    <property type="entry name" value="WNT1"/>
    <property type="match status" value="1"/>
</dbReference>
<name>WNT5A_MELGA</name>
<keyword id="KW-0217">Developmental protein</keyword>
<keyword id="KW-1015">Disulfide bond</keyword>
<keyword id="KW-0272">Extracellular matrix</keyword>
<keyword id="KW-0325">Glycoprotein</keyword>
<keyword id="KW-0449">Lipoprotein</keyword>
<keyword id="KW-1185">Reference proteome</keyword>
<keyword id="KW-0964">Secreted</keyword>
<keyword id="KW-0879">Wnt signaling pathway</keyword>
<accession>P28128</accession>
<sequence length="116" mass="12997">SGSCSLKTCWLQLADFRKVGDALKEKYDSAAAMKLNSRGKLVQMNSRFNAPTIHDLIYIDPSPDYCMRNESTGSLGTQGRLCNKTSEGMDGCELMCCGRGYDQFKTVERERCNCKF</sequence>
<feature type="chain" id="PRO_0000200631" description="Protein Wnt-5a">
    <location>
        <begin position="1" status="less than"/>
        <end position="116" status="greater than"/>
    </location>
</feature>
<feature type="lipid moiety-binding region" description="O-palmitoleoyl serine; by PORCN" evidence="5">
    <location>
        <position position="1"/>
    </location>
</feature>
<feature type="glycosylation site" description="N-linked (GlcNAc...) asparagine" evidence="6">
    <location>
        <position position="69"/>
    </location>
</feature>
<feature type="glycosylation site" description="N-linked (GlcNAc...) asparagine" evidence="6">
    <location>
        <position position="83"/>
    </location>
</feature>
<feature type="disulfide bond" evidence="3">
    <location>
        <begin position="82"/>
        <end position="97"/>
    </location>
</feature>
<feature type="non-terminal residue">
    <location>
        <position position="1"/>
    </location>
</feature>
<feature type="non-terminal residue">
    <location>
        <position position="116"/>
    </location>
</feature>
<protein>
    <recommendedName>
        <fullName>Protein Wnt-5a</fullName>
    </recommendedName>
</protein>
<comment type="function">
    <text evidence="1">Ligand for members of the frizzled family of seven transmembrane receptors. Can activate or inhibit canonical Wnt signaling, depending on receptor context. Required during embryogenesis for extension of the primary anterior-posterior axis.</text>
</comment>
<comment type="subcellular location">
    <subcellularLocation>
        <location evidence="4">Secreted</location>
        <location evidence="4">Extracellular space</location>
        <location evidence="4">Extracellular matrix</location>
    </subcellularLocation>
    <subcellularLocation>
        <location evidence="4">Secreted</location>
    </subcellularLocation>
</comment>
<comment type="PTM">
    <text evidence="2 5">Palmitoleoylation is required for efficient binding to frizzled receptors. Depalmitoleoylation leads to Wnt signaling pathway inhibition.</text>
</comment>
<comment type="similarity">
    <text evidence="7">Belongs to the Wnt family.</text>
</comment>
<reference key="1">
    <citation type="journal article" date="1992" name="Proc. Natl. Acad. Sci. U.S.A.">
        <title>Diversification of the Wnt gene family on the ancestral lineage of vertebrates.</title>
        <authorList>
            <person name="Sidow A."/>
        </authorList>
    </citation>
    <scope>NUCLEOTIDE SEQUENCE [GENOMIC DNA]</scope>
</reference>
<organism>
    <name type="scientific">Meleagris gallopavo</name>
    <name type="common">Wild turkey</name>
    <dbReference type="NCBI Taxonomy" id="9103"/>
    <lineage>
        <taxon>Eukaryota</taxon>
        <taxon>Metazoa</taxon>
        <taxon>Chordata</taxon>
        <taxon>Craniata</taxon>
        <taxon>Vertebrata</taxon>
        <taxon>Euteleostomi</taxon>
        <taxon>Archelosauria</taxon>
        <taxon>Archosauria</taxon>
        <taxon>Dinosauria</taxon>
        <taxon>Saurischia</taxon>
        <taxon>Theropoda</taxon>
        <taxon>Coelurosauria</taxon>
        <taxon>Aves</taxon>
        <taxon>Neognathae</taxon>
        <taxon>Galloanserae</taxon>
        <taxon>Galliformes</taxon>
        <taxon>Phasianidae</taxon>
        <taxon>Meleagridinae</taxon>
        <taxon>Meleagris</taxon>
    </lineage>
</organism>